<name>RL14_BURO1</name>
<organism>
    <name type="scientific">Burkholderia orbicola (strain AU 1054)</name>
    <dbReference type="NCBI Taxonomy" id="331271"/>
    <lineage>
        <taxon>Bacteria</taxon>
        <taxon>Pseudomonadati</taxon>
        <taxon>Pseudomonadota</taxon>
        <taxon>Betaproteobacteria</taxon>
        <taxon>Burkholderiales</taxon>
        <taxon>Burkholderiaceae</taxon>
        <taxon>Burkholderia</taxon>
        <taxon>Burkholderia cepacia complex</taxon>
        <taxon>Burkholderia orbicola</taxon>
    </lineage>
</organism>
<accession>Q1BRV8</accession>
<protein>
    <recommendedName>
        <fullName evidence="1">Large ribosomal subunit protein uL14</fullName>
    </recommendedName>
    <alternativeName>
        <fullName evidence="2">50S ribosomal protein L14</fullName>
    </alternativeName>
</protein>
<dbReference type="EMBL" id="CP000378">
    <property type="protein sequence ID" value="ABF77647.1"/>
    <property type="status" value="ALT_INIT"/>
    <property type="molecule type" value="Genomic_DNA"/>
</dbReference>
<dbReference type="SMR" id="Q1BRV8"/>
<dbReference type="HOGENOM" id="CLU_095071_2_1_4"/>
<dbReference type="GO" id="GO:0022625">
    <property type="term" value="C:cytosolic large ribosomal subunit"/>
    <property type="evidence" value="ECO:0007669"/>
    <property type="project" value="TreeGrafter"/>
</dbReference>
<dbReference type="GO" id="GO:0070180">
    <property type="term" value="F:large ribosomal subunit rRNA binding"/>
    <property type="evidence" value="ECO:0007669"/>
    <property type="project" value="TreeGrafter"/>
</dbReference>
<dbReference type="GO" id="GO:0003735">
    <property type="term" value="F:structural constituent of ribosome"/>
    <property type="evidence" value="ECO:0007669"/>
    <property type="project" value="InterPro"/>
</dbReference>
<dbReference type="GO" id="GO:0006412">
    <property type="term" value="P:translation"/>
    <property type="evidence" value="ECO:0007669"/>
    <property type="project" value="UniProtKB-UniRule"/>
</dbReference>
<dbReference type="CDD" id="cd00337">
    <property type="entry name" value="Ribosomal_uL14"/>
    <property type="match status" value="1"/>
</dbReference>
<dbReference type="FunFam" id="2.40.150.20:FF:000001">
    <property type="entry name" value="50S ribosomal protein L14"/>
    <property type="match status" value="1"/>
</dbReference>
<dbReference type="Gene3D" id="2.40.150.20">
    <property type="entry name" value="Ribosomal protein L14"/>
    <property type="match status" value="1"/>
</dbReference>
<dbReference type="HAMAP" id="MF_01367">
    <property type="entry name" value="Ribosomal_uL14"/>
    <property type="match status" value="1"/>
</dbReference>
<dbReference type="InterPro" id="IPR000218">
    <property type="entry name" value="Ribosomal_uL14"/>
</dbReference>
<dbReference type="InterPro" id="IPR005745">
    <property type="entry name" value="Ribosomal_uL14_bac-type"/>
</dbReference>
<dbReference type="InterPro" id="IPR019972">
    <property type="entry name" value="Ribosomal_uL14_CS"/>
</dbReference>
<dbReference type="InterPro" id="IPR036853">
    <property type="entry name" value="Ribosomal_uL14_sf"/>
</dbReference>
<dbReference type="NCBIfam" id="TIGR01067">
    <property type="entry name" value="rplN_bact"/>
    <property type="match status" value="1"/>
</dbReference>
<dbReference type="PANTHER" id="PTHR11761">
    <property type="entry name" value="50S/60S RIBOSOMAL PROTEIN L14/L23"/>
    <property type="match status" value="1"/>
</dbReference>
<dbReference type="PANTHER" id="PTHR11761:SF3">
    <property type="entry name" value="LARGE RIBOSOMAL SUBUNIT PROTEIN UL14M"/>
    <property type="match status" value="1"/>
</dbReference>
<dbReference type="Pfam" id="PF00238">
    <property type="entry name" value="Ribosomal_L14"/>
    <property type="match status" value="1"/>
</dbReference>
<dbReference type="SMART" id="SM01374">
    <property type="entry name" value="Ribosomal_L14"/>
    <property type="match status" value="1"/>
</dbReference>
<dbReference type="SUPFAM" id="SSF50193">
    <property type="entry name" value="Ribosomal protein L14"/>
    <property type="match status" value="1"/>
</dbReference>
<dbReference type="PROSITE" id="PS00049">
    <property type="entry name" value="RIBOSOMAL_L14"/>
    <property type="match status" value="1"/>
</dbReference>
<proteinExistence type="inferred from homology"/>
<evidence type="ECO:0000255" key="1">
    <source>
        <dbReference type="HAMAP-Rule" id="MF_01367"/>
    </source>
</evidence>
<evidence type="ECO:0000305" key="2"/>
<reference key="1">
    <citation type="submission" date="2006-05" db="EMBL/GenBank/DDBJ databases">
        <title>Complete sequence of chromosome 1 of Burkholderia cenocepacia AU 1054.</title>
        <authorList>
            <consortium name="US DOE Joint Genome Institute"/>
            <person name="Copeland A."/>
            <person name="Lucas S."/>
            <person name="Lapidus A."/>
            <person name="Barry K."/>
            <person name="Detter J.C."/>
            <person name="Glavina del Rio T."/>
            <person name="Hammon N."/>
            <person name="Israni S."/>
            <person name="Dalin E."/>
            <person name="Tice H."/>
            <person name="Pitluck S."/>
            <person name="Chain P."/>
            <person name="Malfatti S."/>
            <person name="Shin M."/>
            <person name="Vergez L."/>
            <person name="Schmutz J."/>
            <person name="Larimer F."/>
            <person name="Land M."/>
            <person name="Hauser L."/>
            <person name="Kyrpides N."/>
            <person name="Lykidis A."/>
            <person name="LiPuma J.J."/>
            <person name="Konstantinidis K."/>
            <person name="Tiedje J.M."/>
            <person name="Richardson P."/>
        </authorList>
    </citation>
    <scope>NUCLEOTIDE SEQUENCE [LARGE SCALE GENOMIC DNA]</scope>
    <source>
        <strain>AU 1054</strain>
    </source>
</reference>
<gene>
    <name evidence="1" type="primary">rplN</name>
    <name type="ordered locus">Bcen_2749</name>
</gene>
<sequence length="122" mass="13406">MIQTESRLEVADNTGAREVLCIKVLGGSKRRYAGIGDIIKVSVKEATPRGRVKKGEIYNAVVVRTAKGVRRQDGSLIKFDGNAAVLLNNKLEPIGTRIFGPVTRELRSERFMKIVSLAPEVL</sequence>
<keyword id="KW-0687">Ribonucleoprotein</keyword>
<keyword id="KW-0689">Ribosomal protein</keyword>
<keyword id="KW-0694">RNA-binding</keyword>
<keyword id="KW-0699">rRNA-binding</keyword>
<feature type="chain" id="PRO_0000266460" description="Large ribosomal subunit protein uL14">
    <location>
        <begin position="1"/>
        <end position="122"/>
    </location>
</feature>
<comment type="function">
    <text evidence="1">Binds to 23S rRNA. Forms part of two intersubunit bridges in the 70S ribosome.</text>
</comment>
<comment type="subunit">
    <text evidence="1">Part of the 50S ribosomal subunit. Forms a cluster with proteins L3 and L19. In the 70S ribosome, L14 and L19 interact and together make contacts with the 16S rRNA in bridges B5 and B8.</text>
</comment>
<comment type="similarity">
    <text evidence="1">Belongs to the universal ribosomal protein uL14 family.</text>
</comment>
<comment type="sequence caution" evidence="2">
    <conflict type="erroneous initiation">
        <sequence resource="EMBL-CDS" id="ABF77647"/>
    </conflict>
</comment>